<feature type="initiator methionine" description="Removed" evidence="1">
    <location>
        <position position="1"/>
    </location>
</feature>
<feature type="chain" id="PRO_0000177414" description="Large ribosomal subunit protein bL35">
    <location>
        <begin position="2"/>
        <end position="65"/>
    </location>
</feature>
<feature type="region of interest" description="Disordered" evidence="3">
    <location>
        <begin position="1"/>
        <end position="22"/>
    </location>
</feature>
<feature type="compositionally biased region" description="Basic residues" evidence="3">
    <location>
        <begin position="10"/>
        <end position="22"/>
    </location>
</feature>
<comment type="similarity">
    <text evidence="2">Belongs to the bacterial ribosomal protein bL35 family.</text>
</comment>
<name>RL35_SALTY</name>
<reference key="1">
    <citation type="journal article" date="2001" name="Nature">
        <title>Complete genome sequence of Salmonella enterica serovar Typhimurium LT2.</title>
        <authorList>
            <person name="McClelland M."/>
            <person name="Sanderson K.E."/>
            <person name="Spieth J."/>
            <person name="Clifton S.W."/>
            <person name="Latreille P."/>
            <person name="Courtney L."/>
            <person name="Porwollik S."/>
            <person name="Ali J."/>
            <person name="Dante M."/>
            <person name="Du F."/>
            <person name="Hou S."/>
            <person name="Layman D."/>
            <person name="Leonard S."/>
            <person name="Nguyen C."/>
            <person name="Scott K."/>
            <person name="Holmes A."/>
            <person name="Grewal N."/>
            <person name="Mulvaney E."/>
            <person name="Ryan E."/>
            <person name="Sun H."/>
            <person name="Florea L."/>
            <person name="Miller W."/>
            <person name="Stoneking T."/>
            <person name="Nhan M."/>
            <person name="Waterston R."/>
            <person name="Wilson R.K."/>
        </authorList>
    </citation>
    <scope>NUCLEOTIDE SEQUENCE [LARGE SCALE GENOMIC DNA]</scope>
    <source>
        <strain>LT2 / SGSC1412 / ATCC 700720</strain>
    </source>
</reference>
<proteinExistence type="inferred from homology"/>
<sequence length="65" mass="7289">MPKIKTVRGAAKRFKKTGKGGFKHKHANLRHILTKKATKRKRHLRPKAMVSKGDLGLVIACLPYA</sequence>
<gene>
    <name evidence="2" type="primary">rpmI</name>
    <name type="ordered locus">STM1335</name>
</gene>
<protein>
    <recommendedName>
        <fullName evidence="2">Large ribosomal subunit protein bL35</fullName>
    </recommendedName>
    <alternativeName>
        <fullName evidence="4">50S ribosomal protein L35</fullName>
    </alternativeName>
</protein>
<organism>
    <name type="scientific">Salmonella typhimurium (strain LT2 / SGSC1412 / ATCC 700720)</name>
    <dbReference type="NCBI Taxonomy" id="99287"/>
    <lineage>
        <taxon>Bacteria</taxon>
        <taxon>Pseudomonadati</taxon>
        <taxon>Pseudomonadota</taxon>
        <taxon>Gammaproteobacteria</taxon>
        <taxon>Enterobacterales</taxon>
        <taxon>Enterobacteriaceae</taxon>
        <taxon>Salmonella</taxon>
    </lineage>
</organism>
<evidence type="ECO:0000250" key="1"/>
<evidence type="ECO:0000255" key="2">
    <source>
        <dbReference type="HAMAP-Rule" id="MF_00514"/>
    </source>
</evidence>
<evidence type="ECO:0000256" key="3">
    <source>
        <dbReference type="SAM" id="MobiDB-lite"/>
    </source>
</evidence>
<evidence type="ECO:0000305" key="4"/>
<accession>P0A7Q3</accession>
<accession>P07085</accession>
<accession>P78275</accession>
<keyword id="KW-1185">Reference proteome</keyword>
<keyword id="KW-0687">Ribonucleoprotein</keyword>
<keyword id="KW-0689">Ribosomal protein</keyword>
<dbReference type="EMBL" id="AE006468">
    <property type="protein sequence ID" value="AAL20260.1"/>
    <property type="molecule type" value="Genomic_DNA"/>
</dbReference>
<dbReference type="RefSeq" id="NP_460301.1">
    <property type="nucleotide sequence ID" value="NC_003197.2"/>
</dbReference>
<dbReference type="RefSeq" id="WP_001124225.1">
    <property type="nucleotide sequence ID" value="NC_003197.2"/>
</dbReference>
<dbReference type="SMR" id="P0A7Q3"/>
<dbReference type="STRING" id="99287.STM1335"/>
<dbReference type="PaxDb" id="99287-STM1335"/>
<dbReference type="GeneID" id="1252853"/>
<dbReference type="GeneID" id="97601348"/>
<dbReference type="KEGG" id="stm:STM1335"/>
<dbReference type="PATRIC" id="fig|99287.12.peg.1418"/>
<dbReference type="HOGENOM" id="CLU_169643_1_1_6"/>
<dbReference type="OMA" id="PKIKTHR"/>
<dbReference type="PhylomeDB" id="P0A7Q3"/>
<dbReference type="BioCyc" id="SENT99287:STM1335-MONOMER"/>
<dbReference type="PRO" id="PR:P0A7Q3"/>
<dbReference type="Proteomes" id="UP000001014">
    <property type="component" value="Chromosome"/>
</dbReference>
<dbReference type="GO" id="GO:0022625">
    <property type="term" value="C:cytosolic large ribosomal subunit"/>
    <property type="evidence" value="ECO:0000318"/>
    <property type="project" value="GO_Central"/>
</dbReference>
<dbReference type="GO" id="GO:0003735">
    <property type="term" value="F:structural constituent of ribosome"/>
    <property type="evidence" value="ECO:0000318"/>
    <property type="project" value="GO_Central"/>
</dbReference>
<dbReference type="GO" id="GO:0006412">
    <property type="term" value="P:translation"/>
    <property type="evidence" value="ECO:0007669"/>
    <property type="project" value="UniProtKB-UniRule"/>
</dbReference>
<dbReference type="FunFam" id="4.10.410.60:FF:000001">
    <property type="entry name" value="50S ribosomal protein L35"/>
    <property type="match status" value="1"/>
</dbReference>
<dbReference type="Gene3D" id="4.10.410.60">
    <property type="match status" value="1"/>
</dbReference>
<dbReference type="HAMAP" id="MF_00514">
    <property type="entry name" value="Ribosomal_bL35"/>
    <property type="match status" value="1"/>
</dbReference>
<dbReference type="InterPro" id="IPR001706">
    <property type="entry name" value="Ribosomal_bL35"/>
</dbReference>
<dbReference type="InterPro" id="IPR021137">
    <property type="entry name" value="Ribosomal_bL35-like"/>
</dbReference>
<dbReference type="InterPro" id="IPR018265">
    <property type="entry name" value="Ribosomal_bL35_CS"/>
</dbReference>
<dbReference type="InterPro" id="IPR037229">
    <property type="entry name" value="Ribosomal_bL35_sf"/>
</dbReference>
<dbReference type="NCBIfam" id="TIGR00001">
    <property type="entry name" value="rpmI_bact"/>
    <property type="match status" value="1"/>
</dbReference>
<dbReference type="PANTHER" id="PTHR33343">
    <property type="entry name" value="54S RIBOSOMAL PROTEIN BL35M"/>
    <property type="match status" value="1"/>
</dbReference>
<dbReference type="PANTHER" id="PTHR33343:SF1">
    <property type="entry name" value="LARGE RIBOSOMAL SUBUNIT PROTEIN BL35M"/>
    <property type="match status" value="1"/>
</dbReference>
<dbReference type="Pfam" id="PF01632">
    <property type="entry name" value="Ribosomal_L35p"/>
    <property type="match status" value="1"/>
</dbReference>
<dbReference type="PRINTS" id="PR00064">
    <property type="entry name" value="RIBOSOMALL35"/>
</dbReference>
<dbReference type="SUPFAM" id="SSF143034">
    <property type="entry name" value="L35p-like"/>
    <property type="match status" value="1"/>
</dbReference>
<dbReference type="PROSITE" id="PS00936">
    <property type="entry name" value="RIBOSOMAL_L35"/>
    <property type="match status" value="1"/>
</dbReference>